<dbReference type="EMBL" id="X70529">
    <property type="protein sequence ID" value="CAA49921.1"/>
    <property type="molecule type" value="Genomic_DNA"/>
</dbReference>
<dbReference type="EMBL" id="Z36126">
    <property type="protein sequence ID" value="CAA85220.1"/>
    <property type="molecule type" value="Genomic_DNA"/>
</dbReference>
<dbReference type="EMBL" id="BK006936">
    <property type="protein sequence ID" value="DAA07374.1"/>
    <property type="molecule type" value="Genomic_DNA"/>
</dbReference>
<dbReference type="PIR" id="S32959">
    <property type="entry name" value="S32959"/>
</dbReference>
<dbReference type="RefSeq" id="NP_009816.1">
    <property type="nucleotide sequence ID" value="NM_001178605.1"/>
</dbReference>
<dbReference type="PDB" id="6AGB">
    <property type="method" value="EM"/>
    <property type="resolution" value="3.48 A"/>
    <property type="chains" value="D=1-279"/>
</dbReference>
<dbReference type="PDB" id="6AH3">
    <property type="method" value="EM"/>
    <property type="resolution" value="3.48 A"/>
    <property type="chains" value="D=1-279"/>
</dbReference>
<dbReference type="PDB" id="6W6V">
    <property type="method" value="EM"/>
    <property type="resolution" value="3.00 A"/>
    <property type="chains" value="D=1-279"/>
</dbReference>
<dbReference type="PDB" id="7C79">
    <property type="method" value="EM"/>
    <property type="resolution" value="2.50 A"/>
    <property type="chains" value="D=1-279"/>
</dbReference>
<dbReference type="PDB" id="7C7A">
    <property type="method" value="EM"/>
    <property type="resolution" value="2.80 A"/>
    <property type="chains" value="D=1-279"/>
</dbReference>
<dbReference type="PDBsum" id="6AGB"/>
<dbReference type="PDBsum" id="6AH3"/>
<dbReference type="PDBsum" id="6W6V"/>
<dbReference type="PDBsum" id="7C79"/>
<dbReference type="PDBsum" id="7C7A"/>
<dbReference type="EMDB" id="EMD-21564"/>
<dbReference type="EMDB" id="EMD-30296"/>
<dbReference type="EMDB" id="EMD-30297"/>
<dbReference type="EMDB" id="EMD-9616"/>
<dbReference type="EMDB" id="EMD-9622"/>
<dbReference type="SMR" id="P38336"/>
<dbReference type="BioGRID" id="32953">
    <property type="interactions" value="299"/>
</dbReference>
<dbReference type="ComplexPortal" id="CPX-1873">
    <property type="entry name" value="Nucleolar ribonuclease P complex"/>
</dbReference>
<dbReference type="ComplexPortal" id="CPX-3284">
    <property type="entry name" value="Nucleolar ribonuclease MRP complex"/>
</dbReference>
<dbReference type="DIP" id="DIP-6772N"/>
<dbReference type="FunCoup" id="P38336">
    <property type="interactions" value="256"/>
</dbReference>
<dbReference type="IntAct" id="P38336">
    <property type="interactions" value="11"/>
</dbReference>
<dbReference type="MINT" id="P38336"/>
<dbReference type="STRING" id="4932.YBR257W"/>
<dbReference type="iPTMnet" id="P38336"/>
<dbReference type="PaxDb" id="4932-YBR257W"/>
<dbReference type="PeptideAtlas" id="P38336"/>
<dbReference type="EnsemblFungi" id="YBR257W_mRNA">
    <property type="protein sequence ID" value="YBR257W"/>
    <property type="gene ID" value="YBR257W"/>
</dbReference>
<dbReference type="GeneID" id="852560"/>
<dbReference type="KEGG" id="sce:YBR257W"/>
<dbReference type="AGR" id="SGD:S000000461"/>
<dbReference type="SGD" id="S000000461">
    <property type="gene designation" value="POP4"/>
</dbReference>
<dbReference type="VEuPathDB" id="FungiDB:YBR257W"/>
<dbReference type="eggNOG" id="KOG4046">
    <property type="taxonomic scope" value="Eukaryota"/>
</dbReference>
<dbReference type="GeneTree" id="ENSGT00390000010067"/>
<dbReference type="HOGENOM" id="CLU_998037_0_0_1"/>
<dbReference type="InParanoid" id="P38336"/>
<dbReference type="OMA" id="NMIGIEG"/>
<dbReference type="OrthoDB" id="124041at2759"/>
<dbReference type="BioCyc" id="YEAST:G3O-29181-MONOMER"/>
<dbReference type="BioGRID-ORCS" id="852560">
    <property type="hits" value="6 hits in 10 CRISPR screens"/>
</dbReference>
<dbReference type="CD-CODE" id="7CAF9006">
    <property type="entry name" value="Tam body"/>
</dbReference>
<dbReference type="CD-CODE" id="BDAE0F88">
    <property type="entry name" value="Nucleolus"/>
</dbReference>
<dbReference type="PRO" id="PR:P38336"/>
<dbReference type="Proteomes" id="UP000002311">
    <property type="component" value="Chromosome II"/>
</dbReference>
<dbReference type="RNAct" id="P38336">
    <property type="molecule type" value="protein"/>
</dbReference>
<dbReference type="GO" id="GO:0005655">
    <property type="term" value="C:nucleolar ribonuclease P complex"/>
    <property type="evidence" value="ECO:0000314"/>
    <property type="project" value="SGD"/>
</dbReference>
<dbReference type="GO" id="GO:0000172">
    <property type="term" value="C:ribonuclease MRP complex"/>
    <property type="evidence" value="ECO:0000314"/>
    <property type="project" value="SGD"/>
</dbReference>
<dbReference type="GO" id="GO:0030677">
    <property type="term" value="C:ribonuclease P complex"/>
    <property type="evidence" value="ECO:0000314"/>
    <property type="project" value="SGD"/>
</dbReference>
<dbReference type="GO" id="GO:0033204">
    <property type="term" value="F:ribonuclease P RNA binding"/>
    <property type="evidence" value="ECO:0000318"/>
    <property type="project" value="GO_Central"/>
</dbReference>
<dbReference type="GO" id="GO:0003723">
    <property type="term" value="F:RNA binding"/>
    <property type="evidence" value="ECO:0000314"/>
    <property type="project" value="SGD"/>
</dbReference>
<dbReference type="GO" id="GO:0042134">
    <property type="term" value="F:rRNA primary transcript binding"/>
    <property type="evidence" value="ECO:0000314"/>
    <property type="project" value="SGD"/>
</dbReference>
<dbReference type="GO" id="GO:0034965">
    <property type="term" value="P:intronic box C/D snoRNA processing"/>
    <property type="evidence" value="ECO:0000314"/>
    <property type="project" value="SGD"/>
</dbReference>
<dbReference type="GO" id="GO:0000460">
    <property type="term" value="P:maturation of 5.8S rRNA"/>
    <property type="evidence" value="ECO:0000314"/>
    <property type="project" value="ComplexPortal"/>
</dbReference>
<dbReference type="GO" id="GO:0000294">
    <property type="term" value="P:nuclear-transcribed mRNA catabolic process, RNase MRP-dependent"/>
    <property type="evidence" value="ECO:0000314"/>
    <property type="project" value="SGD"/>
</dbReference>
<dbReference type="GO" id="GO:0006364">
    <property type="term" value="P:rRNA processing"/>
    <property type="evidence" value="ECO:0000315"/>
    <property type="project" value="SGD"/>
</dbReference>
<dbReference type="GO" id="GO:0001682">
    <property type="term" value="P:tRNA 5'-leader removal"/>
    <property type="evidence" value="ECO:0000314"/>
    <property type="project" value="ComplexPortal"/>
</dbReference>
<dbReference type="GO" id="GO:0008033">
    <property type="term" value="P:tRNA processing"/>
    <property type="evidence" value="ECO:0000315"/>
    <property type="project" value="SGD"/>
</dbReference>
<dbReference type="FunFam" id="2.30.30.210:FF:000004">
    <property type="entry name" value="Ribonuclease P protein subunit"/>
    <property type="match status" value="1"/>
</dbReference>
<dbReference type="Gene3D" id="2.30.30.210">
    <property type="entry name" value="Ribonuclease P/MRP, subunit p29"/>
    <property type="match status" value="1"/>
</dbReference>
<dbReference type="InterPro" id="IPR016848">
    <property type="entry name" value="RNase_P/MRP_Rpp29-subunit"/>
</dbReference>
<dbReference type="InterPro" id="IPR036980">
    <property type="entry name" value="RNase_P/MRP_Rpp29_sf"/>
</dbReference>
<dbReference type="InterPro" id="IPR023534">
    <property type="entry name" value="Rof/RNase_P-like"/>
</dbReference>
<dbReference type="InterPro" id="IPR002730">
    <property type="entry name" value="Rpp29/RNP1"/>
</dbReference>
<dbReference type="PANTHER" id="PTHR13348:SF0">
    <property type="entry name" value="RIBONUCLEASE P PROTEIN SUBUNIT P29"/>
    <property type="match status" value="1"/>
</dbReference>
<dbReference type="PANTHER" id="PTHR13348">
    <property type="entry name" value="RIBONUCLEASE P SUBUNIT P29"/>
    <property type="match status" value="1"/>
</dbReference>
<dbReference type="Pfam" id="PF01868">
    <property type="entry name" value="RNase_P-MRP_p29"/>
    <property type="match status" value="1"/>
</dbReference>
<dbReference type="PIRSF" id="PIRSF027081">
    <property type="entry name" value="RNase_P/MRP_p29_subunit"/>
    <property type="match status" value="1"/>
</dbReference>
<dbReference type="SMART" id="SM00538">
    <property type="entry name" value="POP4"/>
    <property type="match status" value="1"/>
</dbReference>
<dbReference type="SUPFAM" id="SSF101744">
    <property type="entry name" value="Rof/RNase P subunit-like"/>
    <property type="match status" value="1"/>
</dbReference>
<accession>P38336</accession>
<accession>D6VQQ4</accession>
<gene>
    <name type="primary">POP4</name>
    <name type="ordered locus">YBR257W</name>
    <name type="ORF">YBR1725</name>
</gene>
<name>POP4_YEAST</name>
<reference key="1">
    <citation type="journal article" date="1993" name="Yeast">
        <title>The complete sequence of a 19,482 bp segment located on the right arm of chromosome II from Saccharomyces cerevisiae.</title>
        <authorList>
            <person name="Doignon F."/>
            <person name="Biteau N."/>
            <person name="Crouzet M."/>
            <person name="Aigle M."/>
        </authorList>
    </citation>
    <scope>NUCLEOTIDE SEQUENCE [GENOMIC DNA]</scope>
    <source>
        <strain>ATCC 204508 / S288c</strain>
    </source>
</reference>
<reference key="2">
    <citation type="journal article" date="1994" name="EMBO J.">
        <title>Complete DNA sequence of yeast chromosome II.</title>
        <authorList>
            <person name="Feldmann H."/>
            <person name="Aigle M."/>
            <person name="Aljinovic G."/>
            <person name="Andre B."/>
            <person name="Baclet M.C."/>
            <person name="Barthe C."/>
            <person name="Baur A."/>
            <person name="Becam A.-M."/>
            <person name="Biteau N."/>
            <person name="Boles E."/>
            <person name="Brandt T."/>
            <person name="Brendel M."/>
            <person name="Brueckner M."/>
            <person name="Bussereau F."/>
            <person name="Christiansen C."/>
            <person name="Contreras R."/>
            <person name="Crouzet M."/>
            <person name="Cziepluch C."/>
            <person name="Demolis N."/>
            <person name="Delaveau T."/>
            <person name="Doignon F."/>
            <person name="Domdey H."/>
            <person name="Duesterhus S."/>
            <person name="Dubois E."/>
            <person name="Dujon B."/>
            <person name="El Bakkoury M."/>
            <person name="Entian K.-D."/>
            <person name="Feuermann M."/>
            <person name="Fiers W."/>
            <person name="Fobo G.M."/>
            <person name="Fritz C."/>
            <person name="Gassenhuber J."/>
            <person name="Glansdorff N."/>
            <person name="Goffeau A."/>
            <person name="Grivell L.A."/>
            <person name="de Haan M."/>
            <person name="Hein C."/>
            <person name="Herbert C.J."/>
            <person name="Hollenberg C.P."/>
            <person name="Holmstroem K."/>
            <person name="Jacq C."/>
            <person name="Jacquet M."/>
            <person name="Jauniaux J.-C."/>
            <person name="Jonniaux J.-L."/>
            <person name="Kallesoee T."/>
            <person name="Kiesau P."/>
            <person name="Kirchrath L."/>
            <person name="Koetter P."/>
            <person name="Korol S."/>
            <person name="Liebl S."/>
            <person name="Logghe M."/>
            <person name="Lohan A.J.E."/>
            <person name="Louis E.J."/>
            <person name="Li Z.Y."/>
            <person name="Maat M.J."/>
            <person name="Mallet L."/>
            <person name="Mannhaupt G."/>
            <person name="Messenguy F."/>
            <person name="Miosga T."/>
            <person name="Molemans F."/>
            <person name="Mueller S."/>
            <person name="Nasr F."/>
            <person name="Obermaier B."/>
            <person name="Perea J."/>
            <person name="Pierard A."/>
            <person name="Piravandi E."/>
            <person name="Pohl F.M."/>
            <person name="Pohl T.M."/>
            <person name="Potier S."/>
            <person name="Proft M."/>
            <person name="Purnelle B."/>
            <person name="Ramezani Rad M."/>
            <person name="Rieger M."/>
            <person name="Rose M."/>
            <person name="Schaaff-Gerstenschlaeger I."/>
            <person name="Scherens B."/>
            <person name="Schwarzlose C."/>
            <person name="Skala J."/>
            <person name="Slonimski P.P."/>
            <person name="Smits P.H.M."/>
            <person name="Souciet J.-L."/>
            <person name="Steensma H.Y."/>
            <person name="Stucka R."/>
            <person name="Urrestarazu L.A."/>
            <person name="van der Aart Q.J.M."/>
            <person name="Van Dyck L."/>
            <person name="Vassarotti A."/>
            <person name="Vetter I."/>
            <person name="Vierendeels F."/>
            <person name="Vissers S."/>
            <person name="Wagner G."/>
            <person name="de Wergifosse P."/>
            <person name="Wolfe K.H."/>
            <person name="Zagulski M."/>
            <person name="Zimmermann F.K."/>
            <person name="Mewes H.-W."/>
            <person name="Kleine K."/>
        </authorList>
    </citation>
    <scope>NUCLEOTIDE SEQUENCE [LARGE SCALE GENOMIC DNA]</scope>
    <source>
        <strain>ATCC 204508 / S288c</strain>
    </source>
</reference>
<reference key="3">
    <citation type="journal article" date="2014" name="G3 (Bethesda)">
        <title>The reference genome sequence of Saccharomyces cerevisiae: Then and now.</title>
        <authorList>
            <person name="Engel S.R."/>
            <person name="Dietrich F.S."/>
            <person name="Fisk D.G."/>
            <person name="Binkley G."/>
            <person name="Balakrishnan R."/>
            <person name="Costanzo M.C."/>
            <person name="Dwight S.S."/>
            <person name="Hitz B.C."/>
            <person name="Karra K."/>
            <person name="Nash R.S."/>
            <person name="Weng S."/>
            <person name="Wong E.D."/>
            <person name="Lloyd P."/>
            <person name="Skrzypek M.S."/>
            <person name="Miyasato S.R."/>
            <person name="Simison M."/>
            <person name="Cherry J.M."/>
        </authorList>
    </citation>
    <scope>GENOME REANNOTATION</scope>
    <source>
        <strain>ATCC 204508 / S288c</strain>
    </source>
</reference>
<reference key="4">
    <citation type="journal article" date="1997" name="RNA">
        <title>A novel protein shared by RNase MRP and RNase P.</title>
        <authorList>
            <person name="Chu S."/>
            <person name="Zengel J.M."/>
            <person name="Lindahl L."/>
        </authorList>
    </citation>
    <scope>FUNCTION</scope>
    <scope>SUBUNIT</scope>
</reference>
<reference key="5">
    <citation type="journal article" date="1998" name="Genes Dev.">
        <title>Purification and characterization of the nuclear RNase P holoenzyme complex reveals extensive subunit overlap with RNase MRP.</title>
        <authorList>
            <person name="Chamberlain J.R."/>
            <person name="Lee Y."/>
            <person name="Lane W.S."/>
            <person name="Engelke D.R."/>
        </authorList>
    </citation>
    <scope>FUNCTION</scope>
    <scope>IDENTIFICATION IN THE RNASE P COMPLEX BY MASS SPECTROMETRY</scope>
</reference>
<reference key="6">
    <citation type="journal article" date="2003" name="Mol. Cell">
        <title>Assigning function to yeast proteins by integration of technologies.</title>
        <authorList>
            <person name="Hazbun T.R."/>
            <person name="Malmstroem L."/>
            <person name="Anderson S."/>
            <person name="Graczyk B.J."/>
            <person name="Fox B."/>
            <person name="Riffle M."/>
            <person name="Sundin B.A."/>
            <person name="Aranda J.D."/>
            <person name="McDonald W.H."/>
            <person name="Chiu C.-H."/>
            <person name="Snydsman B.E."/>
            <person name="Bradley P."/>
            <person name="Muller E.G.D."/>
            <person name="Fields S."/>
            <person name="Baker D."/>
            <person name="Yates J.R. III"/>
            <person name="Davis T.N."/>
        </authorList>
    </citation>
    <scope>IDENTIFICATION BY MASS SPECTROMETRY</scope>
</reference>
<reference key="7">
    <citation type="journal article" date="2005" name="J. Biol. Chem.">
        <title>Characterization and purification of Saccharomyces cerevisiae RNase MRP reveals a new unique protein component.</title>
        <authorList>
            <person name="Salinas K."/>
            <person name="Wierzbicki S."/>
            <person name="Zhou L."/>
            <person name="Schmitt M.E."/>
        </authorList>
    </citation>
    <scope>IDENTIFICATION IN THE RNASE MRP COMPLEX BY MASS SPECTROMETRY</scope>
</reference>
<reference key="8">
    <citation type="journal article" date="2008" name="Mol. Cell. Proteomics">
        <title>A multidimensional chromatography technology for in-depth phosphoproteome analysis.</title>
        <authorList>
            <person name="Albuquerque C.P."/>
            <person name="Smolka M.B."/>
            <person name="Payne S.H."/>
            <person name="Bafna V."/>
            <person name="Eng J."/>
            <person name="Zhou H."/>
        </authorList>
    </citation>
    <scope>PHOSPHORYLATION [LARGE SCALE ANALYSIS] AT SER-64</scope>
    <scope>IDENTIFICATION BY MASS SPECTROMETRY [LARGE SCALE ANALYSIS]</scope>
</reference>
<protein>
    <recommendedName>
        <fullName>RNases MRP/P 32.9 kDa subunit</fullName>
    </recommendedName>
    <alternativeName>
        <fullName>RNA-processing protein POP4</fullName>
    </alternativeName>
</protein>
<comment type="function">
    <text evidence="2 3">Required for 5.8S rRNA and tRNA processing; associated with RNase MRP and RNase P.</text>
</comment>
<comment type="subunit">
    <text evidence="1 2 3">Component of nuclear RNase P and RNase MRP complexes. RNase P consists of an RNA moiety and at least 9 protein subunits including POP1, POP3, POP4, POP5, POP6, POP7, POP8, RPP1 and RPR2. RNase MRP complex consists of an RNA moiety and at least 10 protein subunits including POP1, POP3, POP4, POP5, POP6, POP7, POP8, RMP1, RPP1 and SNM1, many of which are shared with the RNase P complex.</text>
</comment>
<comment type="interaction">
    <interactant intactId="EBI-13646">
        <id>P38336</id>
    </interactant>
    <interactant intactId="EBI-13621">
        <id>P41812</id>
        <label>POP1</label>
    </interactant>
    <organismsDiffer>false</organismsDiffer>
    <experiments>6</experiments>
</comment>
<comment type="interaction">
    <interactant intactId="EBI-13646">
        <id>P38336</id>
    </interactant>
    <interactant intactId="EBI-13638">
        <id>P53833</id>
        <label>POP3</label>
    </interactant>
    <organismsDiffer>false</organismsDiffer>
    <experiments>3</experiments>
</comment>
<comment type="interaction">
    <interactant intactId="EBI-13646">
        <id>P38336</id>
    </interactant>
    <interactant intactId="EBI-13654">
        <id>P28005</id>
        <label>POP5</label>
    </interactant>
    <organismsDiffer>false</organismsDiffer>
    <experiments>3</experiments>
</comment>
<comment type="interaction">
    <interactant intactId="EBI-13646">
        <id>P38336</id>
    </interactant>
    <interactant intactId="EBI-13662">
        <id>P53218</id>
        <label>POP6</label>
    </interactant>
    <organismsDiffer>false</organismsDiffer>
    <experiments>5</experiments>
</comment>
<comment type="interaction">
    <interactant intactId="EBI-13646">
        <id>P38336</id>
    </interactant>
    <interactant intactId="EBI-13670">
        <id>P38291</id>
        <label>POP7</label>
    </interactant>
    <organismsDiffer>false</organismsDiffer>
    <experiments>4</experiments>
</comment>
<comment type="interaction">
    <interactant intactId="EBI-13646">
        <id>P38336</id>
    </interactant>
    <interactant intactId="EBI-15968">
        <id>P38786</id>
        <label>RPP1</label>
    </interactant>
    <organismsDiffer>false</organismsDiffer>
    <experiments>4</experiments>
</comment>
<comment type="interaction">
    <interactant intactId="EBI-13646">
        <id>P38336</id>
    </interactant>
    <interactant intactId="EBI-25408">
        <id>P40571</id>
        <label>RPR2</label>
    </interactant>
    <organismsDiffer>false</organismsDiffer>
    <experiments>4</experiments>
</comment>
<comment type="interaction">
    <interactant intactId="EBI-13646">
        <id>P38336</id>
    </interactant>
    <interactant intactId="EBI-15622">
        <id>P40993</id>
        <label>SNM1</label>
    </interactant>
    <organismsDiffer>false</organismsDiffer>
    <experiments>5</experiments>
</comment>
<comment type="subcellular location">
    <subcellularLocation>
        <location evidence="4">Nucleus</location>
    </subcellularLocation>
</comment>
<comment type="similarity">
    <text evidence="4">Belongs to the eukaryotic/archaeal RNase P protein component 1 family.</text>
</comment>
<feature type="chain" id="PRO_0000128422" description="RNases MRP/P 32.9 kDa subunit">
    <location>
        <begin position="1"/>
        <end position="279"/>
    </location>
</feature>
<feature type="modified residue" description="Phosphoserine" evidence="5">
    <location>
        <position position="64"/>
    </location>
</feature>
<feature type="helix" evidence="7">
    <location>
        <begin position="4"/>
        <end position="16"/>
    </location>
</feature>
<feature type="strand" evidence="7">
    <location>
        <begin position="17"/>
        <end position="19"/>
    </location>
</feature>
<feature type="helix" evidence="7">
    <location>
        <begin position="22"/>
        <end position="25"/>
    </location>
</feature>
<feature type="strand" evidence="7">
    <location>
        <begin position="31"/>
        <end position="33"/>
    </location>
</feature>
<feature type="helix" evidence="7">
    <location>
        <begin position="69"/>
        <end position="109"/>
    </location>
</feature>
<feature type="helix" evidence="7">
    <location>
        <begin position="115"/>
        <end position="125"/>
    </location>
</feature>
<feature type="helix" evidence="7">
    <location>
        <begin position="127"/>
        <end position="132"/>
    </location>
</feature>
<feature type="helix" evidence="7">
    <location>
        <begin position="136"/>
        <end position="154"/>
    </location>
</feature>
<feature type="strand" evidence="7">
    <location>
        <begin position="159"/>
        <end position="163"/>
    </location>
</feature>
<feature type="helix" evidence="7">
    <location>
        <begin position="166"/>
        <end position="175"/>
    </location>
</feature>
<feature type="strand" evidence="7">
    <location>
        <begin position="182"/>
        <end position="190"/>
    </location>
</feature>
<feature type="strand" evidence="7">
    <location>
        <begin position="197"/>
        <end position="199"/>
    </location>
</feature>
<feature type="strand" evidence="8">
    <location>
        <begin position="201"/>
        <end position="203"/>
    </location>
</feature>
<feature type="strand" evidence="7">
    <location>
        <begin position="205"/>
        <end position="211"/>
    </location>
</feature>
<feature type="strand" evidence="6">
    <location>
        <begin position="215"/>
        <end position="217"/>
    </location>
</feature>
<feature type="strand" evidence="7">
    <location>
        <begin position="220"/>
        <end position="224"/>
    </location>
</feature>
<feature type="strand" evidence="7">
    <location>
        <begin position="228"/>
        <end position="236"/>
    </location>
</feature>
<feature type="strand" evidence="7">
    <location>
        <begin position="238"/>
        <end position="240"/>
    </location>
</feature>
<feature type="strand" evidence="7">
    <location>
        <begin position="242"/>
        <end position="249"/>
    </location>
</feature>
<feature type="helix" evidence="7">
    <location>
        <begin position="250"/>
        <end position="252"/>
    </location>
</feature>
<feature type="strand" evidence="8">
    <location>
        <begin position="253"/>
        <end position="255"/>
    </location>
</feature>
<feature type="strand" evidence="6">
    <location>
        <begin position="258"/>
        <end position="260"/>
    </location>
</feature>
<feature type="helix" evidence="7">
    <location>
        <begin position="274"/>
        <end position="278"/>
    </location>
</feature>
<evidence type="ECO:0000269" key="1">
    <source>
    </source>
</evidence>
<evidence type="ECO:0000269" key="2">
    <source>
    </source>
</evidence>
<evidence type="ECO:0000269" key="3">
    <source>
    </source>
</evidence>
<evidence type="ECO:0000305" key="4"/>
<evidence type="ECO:0007744" key="5">
    <source>
    </source>
</evidence>
<evidence type="ECO:0007829" key="6">
    <source>
        <dbReference type="PDB" id="6W6V"/>
    </source>
</evidence>
<evidence type="ECO:0007829" key="7">
    <source>
        <dbReference type="PDB" id="7C79"/>
    </source>
</evidence>
<evidence type="ECO:0007829" key="8">
    <source>
        <dbReference type="PDB" id="7C7A"/>
    </source>
</evidence>
<keyword id="KW-0002">3D-structure</keyword>
<keyword id="KW-0539">Nucleus</keyword>
<keyword id="KW-0597">Phosphoprotein</keyword>
<keyword id="KW-1185">Reference proteome</keyword>
<keyword id="KW-0698">rRNA processing</keyword>
<keyword id="KW-0819">tRNA processing</keyword>
<proteinExistence type="evidence at protein level"/>
<sequence>MDRTQTFIKDCLFTKCLEDPEKPFNENRFQDTLLLLPTDGGLTSRLQRQQRKSKLNLDNLQKVSQLESADKQLEKRDYQRINKNSKIALREYINNCKKNTKKCLKLAYENKITDKEDLLHYIEEKHPTIYESLPQYVDFVPMYKELWINYIKELLNITKNLKTFNGSLALLKLSMADYNGALLRVTKSKNKTLIGLQGIVIWDSQKFFIMIVKGNIIDEIKCIPKKGTVFQFEIPISDDDDSALRYSILGDRFKYRSVDRAGRKFKSRRCDDMLYYIQN</sequence>
<organism>
    <name type="scientific">Saccharomyces cerevisiae (strain ATCC 204508 / S288c)</name>
    <name type="common">Baker's yeast</name>
    <dbReference type="NCBI Taxonomy" id="559292"/>
    <lineage>
        <taxon>Eukaryota</taxon>
        <taxon>Fungi</taxon>
        <taxon>Dikarya</taxon>
        <taxon>Ascomycota</taxon>
        <taxon>Saccharomycotina</taxon>
        <taxon>Saccharomycetes</taxon>
        <taxon>Saccharomycetales</taxon>
        <taxon>Saccharomycetaceae</taxon>
        <taxon>Saccharomyces</taxon>
    </lineage>
</organism>